<protein>
    <recommendedName>
        <fullName evidence="1">Pyridoxine/pyridoxamine 5'-phosphate oxidase</fullName>
        <ecNumber evidence="1">1.4.3.5</ecNumber>
    </recommendedName>
    <alternativeName>
        <fullName evidence="1">PNP/PMP oxidase</fullName>
        <shortName evidence="1">PNPOx</shortName>
    </alternativeName>
    <alternativeName>
        <fullName evidence="1">Pyridoxal 5'-phosphate synthase</fullName>
    </alternativeName>
</protein>
<sequence>MDIGDMRRDFESEGLDREHLNEDPVQQFQTWFEDARTAGILEPNAMSLATTGADGMPDLRTVLLKYFDSQGFVFYTNYGSRKAQELQENPRAALLFPWIGLNRQVRIQGAVEKVSKAESLRYFSSRPRGSQIGAWVSEQSQVITSRGLLEQKVAEMKRKFSSGEIPLPSFWGGYRVVPERIEFWQGRPSRLHDRFEYVREGDGWTIQRLQP</sequence>
<gene>
    <name evidence="1" type="primary">pdxH</name>
    <name type="ordered locus">Maqu_0155</name>
</gene>
<comment type="function">
    <text evidence="1">Catalyzes the oxidation of either pyridoxine 5'-phosphate (PNP) or pyridoxamine 5'-phosphate (PMP) into pyridoxal 5'-phosphate (PLP).</text>
</comment>
<comment type="catalytic activity">
    <reaction evidence="1">
        <text>pyridoxamine 5'-phosphate + O2 + H2O = pyridoxal 5'-phosphate + H2O2 + NH4(+)</text>
        <dbReference type="Rhea" id="RHEA:15817"/>
        <dbReference type="ChEBI" id="CHEBI:15377"/>
        <dbReference type="ChEBI" id="CHEBI:15379"/>
        <dbReference type="ChEBI" id="CHEBI:16240"/>
        <dbReference type="ChEBI" id="CHEBI:28938"/>
        <dbReference type="ChEBI" id="CHEBI:58451"/>
        <dbReference type="ChEBI" id="CHEBI:597326"/>
        <dbReference type="EC" id="1.4.3.5"/>
    </reaction>
</comment>
<comment type="catalytic activity">
    <reaction evidence="1">
        <text>pyridoxine 5'-phosphate + O2 = pyridoxal 5'-phosphate + H2O2</text>
        <dbReference type="Rhea" id="RHEA:15149"/>
        <dbReference type="ChEBI" id="CHEBI:15379"/>
        <dbReference type="ChEBI" id="CHEBI:16240"/>
        <dbReference type="ChEBI" id="CHEBI:58589"/>
        <dbReference type="ChEBI" id="CHEBI:597326"/>
        <dbReference type="EC" id="1.4.3.5"/>
    </reaction>
</comment>
<comment type="cofactor">
    <cofactor evidence="1">
        <name>FMN</name>
        <dbReference type="ChEBI" id="CHEBI:58210"/>
    </cofactor>
    <text evidence="1">Binds 1 FMN per subunit.</text>
</comment>
<comment type="pathway">
    <text evidence="1">Cofactor metabolism; pyridoxal 5'-phosphate salvage; pyridoxal 5'-phosphate from pyridoxamine 5'-phosphate: step 1/1.</text>
</comment>
<comment type="pathway">
    <text evidence="1">Cofactor metabolism; pyridoxal 5'-phosphate salvage; pyridoxal 5'-phosphate from pyridoxine 5'-phosphate: step 1/1.</text>
</comment>
<comment type="subunit">
    <text evidence="1">Homodimer.</text>
</comment>
<comment type="similarity">
    <text evidence="1">Belongs to the pyridoxamine 5'-phosphate oxidase family.</text>
</comment>
<feature type="chain" id="PRO_0000292302" description="Pyridoxine/pyridoxamine 5'-phosphate oxidase">
    <location>
        <begin position="1"/>
        <end position="211"/>
    </location>
</feature>
<feature type="binding site" evidence="1">
    <location>
        <begin position="60"/>
        <end position="65"/>
    </location>
    <ligand>
        <name>FMN</name>
        <dbReference type="ChEBI" id="CHEBI:58210"/>
    </ligand>
</feature>
<feature type="binding site" evidence="1">
    <location>
        <position position="65"/>
    </location>
    <ligand>
        <name>substrate</name>
    </ligand>
</feature>
<feature type="binding site" evidence="1">
    <location>
        <begin position="75"/>
        <end position="76"/>
    </location>
    <ligand>
        <name>FMN</name>
        <dbReference type="ChEBI" id="CHEBI:58210"/>
    </ligand>
</feature>
<feature type="binding site" evidence="1">
    <location>
        <position position="81"/>
    </location>
    <ligand>
        <name>FMN</name>
        <dbReference type="ChEBI" id="CHEBI:58210"/>
    </ligand>
</feature>
<feature type="binding site" evidence="1">
    <location>
        <position position="82"/>
    </location>
    <ligand>
        <name>FMN</name>
        <dbReference type="ChEBI" id="CHEBI:58210"/>
    </ligand>
</feature>
<feature type="binding site" evidence="1">
    <location>
        <position position="104"/>
    </location>
    <ligand>
        <name>FMN</name>
        <dbReference type="ChEBI" id="CHEBI:58210"/>
    </ligand>
</feature>
<feature type="binding site" evidence="1">
    <location>
        <position position="122"/>
    </location>
    <ligand>
        <name>substrate</name>
    </ligand>
</feature>
<feature type="binding site" evidence="1">
    <location>
        <position position="126"/>
    </location>
    <ligand>
        <name>substrate</name>
    </ligand>
</feature>
<feature type="binding site" evidence="1">
    <location>
        <position position="130"/>
    </location>
    <ligand>
        <name>substrate</name>
    </ligand>
</feature>
<feature type="binding site" evidence="1">
    <location>
        <begin position="139"/>
        <end position="140"/>
    </location>
    <ligand>
        <name>FMN</name>
        <dbReference type="ChEBI" id="CHEBI:58210"/>
    </ligand>
</feature>
<feature type="binding site" evidence="1">
    <location>
        <position position="184"/>
    </location>
    <ligand>
        <name>FMN</name>
        <dbReference type="ChEBI" id="CHEBI:58210"/>
    </ligand>
</feature>
<feature type="binding site" evidence="1">
    <location>
        <begin position="190"/>
        <end position="192"/>
    </location>
    <ligand>
        <name>substrate</name>
    </ligand>
</feature>
<feature type="binding site" evidence="1">
    <location>
        <position position="194"/>
    </location>
    <ligand>
        <name>FMN</name>
        <dbReference type="ChEBI" id="CHEBI:58210"/>
    </ligand>
</feature>
<organism>
    <name type="scientific">Marinobacter nauticus (strain ATCC 700491 / DSM 11845 / VT8)</name>
    <name type="common">Marinobacter aquaeolei</name>
    <dbReference type="NCBI Taxonomy" id="351348"/>
    <lineage>
        <taxon>Bacteria</taxon>
        <taxon>Pseudomonadati</taxon>
        <taxon>Pseudomonadota</taxon>
        <taxon>Gammaproteobacteria</taxon>
        <taxon>Pseudomonadales</taxon>
        <taxon>Marinobacteraceae</taxon>
        <taxon>Marinobacter</taxon>
    </lineage>
</organism>
<dbReference type="EC" id="1.4.3.5" evidence="1"/>
<dbReference type="EMBL" id="CP000514">
    <property type="protein sequence ID" value="ABM17262.1"/>
    <property type="molecule type" value="Genomic_DNA"/>
</dbReference>
<dbReference type="RefSeq" id="WP_011783735.1">
    <property type="nucleotide sequence ID" value="NC_008740.1"/>
</dbReference>
<dbReference type="SMR" id="A1TWZ3"/>
<dbReference type="STRING" id="351348.Maqu_0155"/>
<dbReference type="GeneID" id="31819687"/>
<dbReference type="KEGG" id="maq:Maqu_0155"/>
<dbReference type="eggNOG" id="COG0259">
    <property type="taxonomic scope" value="Bacteria"/>
</dbReference>
<dbReference type="HOGENOM" id="CLU_032263_2_2_6"/>
<dbReference type="OrthoDB" id="9780392at2"/>
<dbReference type="UniPathway" id="UPA01068">
    <property type="reaction ID" value="UER00304"/>
</dbReference>
<dbReference type="UniPathway" id="UPA01068">
    <property type="reaction ID" value="UER00305"/>
</dbReference>
<dbReference type="Proteomes" id="UP000000998">
    <property type="component" value="Chromosome"/>
</dbReference>
<dbReference type="GO" id="GO:0010181">
    <property type="term" value="F:FMN binding"/>
    <property type="evidence" value="ECO:0007669"/>
    <property type="project" value="UniProtKB-UniRule"/>
</dbReference>
<dbReference type="GO" id="GO:0004733">
    <property type="term" value="F:pyridoxamine phosphate oxidase activity"/>
    <property type="evidence" value="ECO:0007669"/>
    <property type="project" value="UniProtKB-UniRule"/>
</dbReference>
<dbReference type="GO" id="GO:0008615">
    <property type="term" value="P:pyridoxine biosynthetic process"/>
    <property type="evidence" value="ECO:0007669"/>
    <property type="project" value="UniProtKB-KW"/>
</dbReference>
<dbReference type="FunFam" id="2.30.110.10:FF:000005">
    <property type="entry name" value="NAD(P)H-hydrate epimerase"/>
    <property type="match status" value="1"/>
</dbReference>
<dbReference type="Gene3D" id="2.30.110.10">
    <property type="entry name" value="Electron Transport, Fmn-binding Protein, Chain A"/>
    <property type="match status" value="1"/>
</dbReference>
<dbReference type="HAMAP" id="MF_01629">
    <property type="entry name" value="PdxH"/>
    <property type="match status" value="1"/>
</dbReference>
<dbReference type="InterPro" id="IPR000659">
    <property type="entry name" value="Pyridox_Oxase"/>
</dbReference>
<dbReference type="InterPro" id="IPR019740">
    <property type="entry name" value="Pyridox_Oxase_CS"/>
</dbReference>
<dbReference type="InterPro" id="IPR011576">
    <property type="entry name" value="Pyridox_Oxase_N"/>
</dbReference>
<dbReference type="InterPro" id="IPR019576">
    <property type="entry name" value="Pyridoxamine_oxidase_dimer_C"/>
</dbReference>
<dbReference type="InterPro" id="IPR012349">
    <property type="entry name" value="Split_barrel_FMN-bd"/>
</dbReference>
<dbReference type="NCBIfam" id="TIGR00558">
    <property type="entry name" value="pdxH"/>
    <property type="match status" value="1"/>
</dbReference>
<dbReference type="NCBIfam" id="NF004231">
    <property type="entry name" value="PRK05679.1"/>
    <property type="match status" value="1"/>
</dbReference>
<dbReference type="PANTHER" id="PTHR10851:SF0">
    <property type="entry name" value="PYRIDOXINE-5'-PHOSPHATE OXIDASE"/>
    <property type="match status" value="1"/>
</dbReference>
<dbReference type="PANTHER" id="PTHR10851">
    <property type="entry name" value="PYRIDOXINE-5-PHOSPHATE OXIDASE"/>
    <property type="match status" value="1"/>
</dbReference>
<dbReference type="Pfam" id="PF10590">
    <property type="entry name" value="PNP_phzG_C"/>
    <property type="match status" value="1"/>
</dbReference>
<dbReference type="Pfam" id="PF01243">
    <property type="entry name" value="PNPOx_N"/>
    <property type="match status" value="1"/>
</dbReference>
<dbReference type="PIRSF" id="PIRSF000190">
    <property type="entry name" value="Pyd_amn-ph_oxd"/>
    <property type="match status" value="1"/>
</dbReference>
<dbReference type="SUPFAM" id="SSF50475">
    <property type="entry name" value="FMN-binding split barrel"/>
    <property type="match status" value="1"/>
</dbReference>
<dbReference type="PROSITE" id="PS01064">
    <property type="entry name" value="PYRIDOX_OXIDASE"/>
    <property type="match status" value="1"/>
</dbReference>
<accession>A1TWZ3</accession>
<evidence type="ECO:0000255" key="1">
    <source>
        <dbReference type="HAMAP-Rule" id="MF_01629"/>
    </source>
</evidence>
<reference key="1">
    <citation type="journal article" date="2011" name="Appl. Environ. Microbiol.">
        <title>Genomic potential of Marinobacter aquaeolei, a biogeochemical 'opportunitroph'.</title>
        <authorList>
            <person name="Singer E."/>
            <person name="Webb E.A."/>
            <person name="Nelson W.C."/>
            <person name="Heidelberg J.F."/>
            <person name="Ivanova N."/>
            <person name="Pati A."/>
            <person name="Edwards K.J."/>
        </authorList>
    </citation>
    <scope>NUCLEOTIDE SEQUENCE [LARGE SCALE GENOMIC DNA]</scope>
    <source>
        <strain>ATCC 700491 / DSM 11845 / VT8</strain>
    </source>
</reference>
<name>PDXH_MARN8</name>
<keyword id="KW-0285">Flavoprotein</keyword>
<keyword id="KW-0288">FMN</keyword>
<keyword id="KW-0560">Oxidoreductase</keyword>
<keyword id="KW-0664">Pyridoxine biosynthesis</keyword>
<proteinExistence type="inferred from homology"/>